<name>SMIM8_XENTR</name>
<accession>Q28GF4</accession>
<sequence>MSSPSSESSNAKSSPPKEEYRTPGLRGVKTTTLFRAVNPELFIKPNKPVMVFGIVTITMCVAYIAYLHATEENKRELYEAVDSEGNRYTRRKSSKWD</sequence>
<comment type="subcellular location">
    <subcellularLocation>
        <location evidence="3">Membrane</location>
        <topology evidence="3">Single-pass membrane protein</topology>
    </subcellularLocation>
</comment>
<comment type="similarity">
    <text evidence="3">Belongs to the SMIM8 family.</text>
</comment>
<keyword id="KW-0472">Membrane</keyword>
<keyword id="KW-1185">Reference proteome</keyword>
<keyword id="KW-0812">Transmembrane</keyword>
<keyword id="KW-1133">Transmembrane helix</keyword>
<reference key="1">
    <citation type="submission" date="2006-10" db="EMBL/GenBank/DDBJ databases">
        <authorList>
            <consortium name="Sanger Xenopus tropicalis EST/cDNA project"/>
        </authorList>
    </citation>
    <scope>NUCLEOTIDE SEQUENCE [LARGE SCALE MRNA]</scope>
    <source>
        <tissue>Egg</tissue>
    </source>
</reference>
<reference key="2">
    <citation type="submission" date="2006-08" db="EMBL/GenBank/DDBJ databases">
        <authorList>
            <consortium name="NIH - Xenopus Gene Collection (XGC) project"/>
        </authorList>
    </citation>
    <scope>NUCLEOTIDE SEQUENCE [LARGE SCALE MRNA]</scope>
    <source>
        <strain>N6</strain>
        <tissue>Skeletal muscle</tissue>
    </source>
</reference>
<dbReference type="EMBL" id="CR761409">
    <property type="protein sequence ID" value="CAJ82213.1"/>
    <property type="molecule type" value="mRNA"/>
</dbReference>
<dbReference type="EMBL" id="BC121618">
    <property type="protein sequence ID" value="AAI21619.1"/>
    <property type="molecule type" value="mRNA"/>
</dbReference>
<dbReference type="RefSeq" id="NP_001016334.1">
    <property type="nucleotide sequence ID" value="NM_001016334.3"/>
</dbReference>
<dbReference type="RefSeq" id="XP_012818435.1">
    <property type="nucleotide sequence ID" value="XM_012962981.2"/>
</dbReference>
<dbReference type="RefSeq" id="XP_012818436.1">
    <property type="nucleotide sequence ID" value="XM_012962982.3"/>
</dbReference>
<dbReference type="RefSeq" id="XP_012818437.1">
    <property type="nucleotide sequence ID" value="XM_012962983.1"/>
</dbReference>
<dbReference type="RefSeq" id="XP_012818438.1">
    <property type="nucleotide sequence ID" value="XM_012962984.3"/>
</dbReference>
<dbReference type="RefSeq" id="XP_012818439.1">
    <property type="nucleotide sequence ID" value="XM_012962985.3"/>
</dbReference>
<dbReference type="RefSeq" id="XP_012818440.1">
    <property type="nucleotide sequence ID" value="XM_012962986.3"/>
</dbReference>
<dbReference type="RefSeq" id="XP_012818441.1">
    <property type="nucleotide sequence ID" value="XM_012962987.3"/>
</dbReference>
<dbReference type="RefSeq" id="XP_012818442.1">
    <property type="nucleotide sequence ID" value="XM_012962988.3"/>
</dbReference>
<dbReference type="RefSeq" id="XP_012818443.1">
    <property type="nucleotide sequence ID" value="XM_012962989.2"/>
</dbReference>
<dbReference type="RefSeq" id="XP_012818444.1">
    <property type="nucleotide sequence ID" value="XM_012962990.3"/>
</dbReference>
<dbReference type="RefSeq" id="XP_012818445.1">
    <property type="nucleotide sequence ID" value="XM_012962991.3"/>
</dbReference>
<dbReference type="RefSeq" id="XP_012818446.1">
    <property type="nucleotide sequence ID" value="XM_012962992.2"/>
</dbReference>
<dbReference type="RefSeq" id="XP_017949371.1">
    <property type="nucleotide sequence ID" value="XM_018093882.2"/>
</dbReference>
<dbReference type="RefSeq" id="XP_031757562.1">
    <property type="nucleotide sequence ID" value="XM_031901702.1"/>
</dbReference>
<dbReference type="FunCoup" id="Q28GF4">
    <property type="interactions" value="724"/>
</dbReference>
<dbReference type="PaxDb" id="8364-ENSXETP00000053789"/>
<dbReference type="DNASU" id="549088"/>
<dbReference type="GeneID" id="549088"/>
<dbReference type="KEGG" id="xtr:549088"/>
<dbReference type="AGR" id="Xenbase:XB-GENE-940262"/>
<dbReference type="CTD" id="57150"/>
<dbReference type="Xenbase" id="XB-GENE-940262">
    <property type="gene designation" value="smim8"/>
</dbReference>
<dbReference type="eggNOG" id="ENOG502S4X3">
    <property type="taxonomic scope" value="Eukaryota"/>
</dbReference>
<dbReference type="HOGENOM" id="CLU_170028_0_0_1"/>
<dbReference type="InParanoid" id="Q28GF4"/>
<dbReference type="OMA" id="YMHATRE"/>
<dbReference type="OrthoDB" id="1880105at2759"/>
<dbReference type="PhylomeDB" id="Q28GF4"/>
<dbReference type="TreeFam" id="TF323863"/>
<dbReference type="Proteomes" id="UP000008143">
    <property type="component" value="Chromosome 5"/>
</dbReference>
<dbReference type="Bgee" id="ENSXETG00000025086">
    <property type="expression patterns" value="Expressed in 4-cell stage embryo and 12 other cell types or tissues"/>
</dbReference>
<dbReference type="GO" id="GO:0016020">
    <property type="term" value="C:membrane"/>
    <property type="evidence" value="ECO:0007669"/>
    <property type="project" value="UniProtKB-SubCell"/>
</dbReference>
<dbReference type="InterPro" id="IPR026686">
    <property type="entry name" value="UPF0708"/>
</dbReference>
<dbReference type="PANTHER" id="PTHR14274">
    <property type="entry name" value="SMALL INTEGRAL MEMBRANE PROTEIN 8"/>
    <property type="match status" value="1"/>
</dbReference>
<dbReference type="PANTHER" id="PTHR14274:SF1">
    <property type="entry name" value="SMALL INTEGRAL MEMBRANE PROTEIN 8"/>
    <property type="match status" value="1"/>
</dbReference>
<dbReference type="Pfam" id="PF14937">
    <property type="entry name" value="DUF4500"/>
    <property type="match status" value="1"/>
</dbReference>
<organism>
    <name type="scientific">Xenopus tropicalis</name>
    <name type="common">Western clawed frog</name>
    <name type="synonym">Silurana tropicalis</name>
    <dbReference type="NCBI Taxonomy" id="8364"/>
    <lineage>
        <taxon>Eukaryota</taxon>
        <taxon>Metazoa</taxon>
        <taxon>Chordata</taxon>
        <taxon>Craniata</taxon>
        <taxon>Vertebrata</taxon>
        <taxon>Euteleostomi</taxon>
        <taxon>Amphibia</taxon>
        <taxon>Batrachia</taxon>
        <taxon>Anura</taxon>
        <taxon>Pipoidea</taxon>
        <taxon>Pipidae</taxon>
        <taxon>Xenopodinae</taxon>
        <taxon>Xenopus</taxon>
        <taxon>Silurana</taxon>
    </lineage>
</organism>
<feature type="chain" id="PRO_0000360400" description="Small integral membrane protein 8">
    <location>
        <begin position="1"/>
        <end position="97"/>
    </location>
</feature>
<feature type="transmembrane region" description="Helical" evidence="1">
    <location>
        <begin position="49"/>
        <end position="69"/>
    </location>
</feature>
<feature type="region of interest" description="Disordered" evidence="2">
    <location>
        <begin position="1"/>
        <end position="26"/>
    </location>
</feature>
<feature type="compositionally biased region" description="Low complexity" evidence="2">
    <location>
        <begin position="1"/>
        <end position="14"/>
    </location>
</feature>
<evidence type="ECO:0000255" key="1"/>
<evidence type="ECO:0000256" key="2">
    <source>
        <dbReference type="SAM" id="MobiDB-lite"/>
    </source>
</evidence>
<evidence type="ECO:0000305" key="3"/>
<protein>
    <recommendedName>
        <fullName>Small integral membrane protein 8</fullName>
    </recommendedName>
</protein>
<proteinExistence type="inferred from homology"/>
<gene>
    <name type="primary">smim8</name>
    <name type="ORF">TEgg033e03.1</name>
</gene>